<protein>
    <recommendedName>
        <fullName evidence="11">Profilin-1</fullName>
    </recommendedName>
    <alternativeName>
        <fullName evidence="13">AtPROF1</fullName>
    </alternativeName>
    <alternativeName>
        <fullName evidence="11">AthPRF1</fullName>
    </alternativeName>
    <allergenName evidence="13">Ara t 8</allergenName>
</protein>
<accession>Q42449</accession>
<reference key="1">
    <citation type="journal article" date="1996" name="Plant J.">
        <title>Arabidopsis profilins are functionally similar to yeast profilins: identification of a vascular bundle-specific profilin and a pollen-specific profilin.</title>
        <authorList>
            <person name="Christensen H.E.M."/>
            <person name="Ramachandran S."/>
            <person name="Tan C.T."/>
            <person name="Surana U."/>
            <person name="Dong C.H."/>
            <person name="Chua N.-H."/>
        </authorList>
    </citation>
    <scope>NUCLEOTIDE SEQUENCE [GENOMIC DNA / MRNA]</scope>
    <scope>TISSUE SPECIFICITY</scope>
    <source>
        <strain>cv. Columbia</strain>
    </source>
</reference>
<reference key="2">
    <citation type="journal article" date="1996" name="Plant Physiol.">
        <title>The Arabidopsis profilin gene family. Evidence for an ancient split between constitutive and pollen-specific profilin genes.</title>
        <authorList>
            <person name="Huang S."/>
            <person name="McDowell J.M."/>
            <person name="Weise M.J."/>
            <person name="Meagher R.B."/>
        </authorList>
    </citation>
    <scope>NUCLEOTIDE SEQUENCE [GENOMIC DNA / MRNA]</scope>
    <scope>TISSUE SPECIFICITY</scope>
    <source>
        <strain>cv. Columbia</strain>
    </source>
</reference>
<reference key="3">
    <citation type="journal article" date="1999" name="Nature">
        <title>Sequence and analysis of chromosome 2 of the plant Arabidopsis thaliana.</title>
        <authorList>
            <person name="Lin X."/>
            <person name="Kaul S."/>
            <person name="Rounsley S.D."/>
            <person name="Shea T.P."/>
            <person name="Benito M.-I."/>
            <person name="Town C.D."/>
            <person name="Fujii C.Y."/>
            <person name="Mason T.M."/>
            <person name="Bowman C.L."/>
            <person name="Barnstead M.E."/>
            <person name="Feldblyum T.V."/>
            <person name="Buell C.R."/>
            <person name="Ketchum K.A."/>
            <person name="Lee J.J."/>
            <person name="Ronning C.M."/>
            <person name="Koo H.L."/>
            <person name="Moffat K.S."/>
            <person name="Cronin L.A."/>
            <person name="Shen M."/>
            <person name="Pai G."/>
            <person name="Van Aken S."/>
            <person name="Umayam L."/>
            <person name="Tallon L.J."/>
            <person name="Gill J.E."/>
            <person name="Adams M.D."/>
            <person name="Carrera A.J."/>
            <person name="Creasy T.H."/>
            <person name="Goodman H.M."/>
            <person name="Somerville C.R."/>
            <person name="Copenhaver G.P."/>
            <person name="Preuss D."/>
            <person name="Nierman W.C."/>
            <person name="White O."/>
            <person name="Eisen J.A."/>
            <person name="Salzberg S.L."/>
            <person name="Fraser C.M."/>
            <person name="Venter J.C."/>
        </authorList>
    </citation>
    <scope>NUCLEOTIDE SEQUENCE [LARGE SCALE GENOMIC DNA]</scope>
    <source>
        <strain>cv. Columbia</strain>
    </source>
</reference>
<reference key="4">
    <citation type="journal article" date="2017" name="Plant J.">
        <title>Araport11: a complete reannotation of the Arabidopsis thaliana reference genome.</title>
        <authorList>
            <person name="Cheng C.Y."/>
            <person name="Krishnakumar V."/>
            <person name="Chan A.P."/>
            <person name="Thibaud-Nissen F."/>
            <person name="Schobel S."/>
            <person name="Town C.D."/>
        </authorList>
    </citation>
    <scope>GENOME REANNOTATION</scope>
    <source>
        <strain>cv. Columbia</strain>
    </source>
</reference>
<reference key="5">
    <citation type="journal article" date="2003" name="Science">
        <title>Empirical analysis of transcriptional activity in the Arabidopsis genome.</title>
        <authorList>
            <person name="Yamada K."/>
            <person name="Lim J."/>
            <person name="Dale J.M."/>
            <person name="Chen H."/>
            <person name="Shinn P."/>
            <person name="Palm C.J."/>
            <person name="Southwick A.M."/>
            <person name="Wu H.C."/>
            <person name="Kim C.J."/>
            <person name="Nguyen M."/>
            <person name="Pham P.K."/>
            <person name="Cheuk R.F."/>
            <person name="Karlin-Newmann G."/>
            <person name="Liu S.X."/>
            <person name="Lam B."/>
            <person name="Sakano H."/>
            <person name="Wu T."/>
            <person name="Yu G."/>
            <person name="Miranda M."/>
            <person name="Quach H.L."/>
            <person name="Tripp M."/>
            <person name="Chang C.H."/>
            <person name="Lee J.M."/>
            <person name="Toriumi M.J."/>
            <person name="Chan M.M."/>
            <person name="Tang C.C."/>
            <person name="Onodera C.S."/>
            <person name="Deng J.M."/>
            <person name="Akiyama K."/>
            <person name="Ansari Y."/>
            <person name="Arakawa T."/>
            <person name="Banh J."/>
            <person name="Banno F."/>
            <person name="Bowser L."/>
            <person name="Brooks S.Y."/>
            <person name="Carninci P."/>
            <person name="Chao Q."/>
            <person name="Choy N."/>
            <person name="Enju A."/>
            <person name="Goldsmith A.D."/>
            <person name="Gurjal M."/>
            <person name="Hansen N.F."/>
            <person name="Hayashizaki Y."/>
            <person name="Johnson-Hopson C."/>
            <person name="Hsuan V.W."/>
            <person name="Iida K."/>
            <person name="Karnes M."/>
            <person name="Khan S."/>
            <person name="Koesema E."/>
            <person name="Ishida J."/>
            <person name="Jiang P.X."/>
            <person name="Jones T."/>
            <person name="Kawai J."/>
            <person name="Kamiya A."/>
            <person name="Meyers C."/>
            <person name="Nakajima M."/>
            <person name="Narusaka M."/>
            <person name="Seki M."/>
            <person name="Sakurai T."/>
            <person name="Satou M."/>
            <person name="Tamse R."/>
            <person name="Vaysberg M."/>
            <person name="Wallender E.K."/>
            <person name="Wong C."/>
            <person name="Yamamura Y."/>
            <person name="Yuan S."/>
            <person name="Shinozaki K."/>
            <person name="Davis R.W."/>
            <person name="Theologis A."/>
            <person name="Ecker J.R."/>
        </authorList>
    </citation>
    <scope>NUCLEOTIDE SEQUENCE [LARGE SCALE MRNA]</scope>
    <source>
        <strain>cv. Columbia</strain>
    </source>
</reference>
<reference key="6">
    <citation type="journal article" date="2001" name="Plant Cell">
        <title>Small changes in the regulation of one Arabidopsis profilin isovariant, PRF1, alter seedling development.</title>
        <authorList>
            <person name="McKinney E.C."/>
            <person name="Kandasamy M.K."/>
            <person name="Meagher R.B."/>
        </authorList>
    </citation>
    <scope>INDUCTION</scope>
    <scope>DISRUPTION PHENOTYPE</scope>
</reference>
<reference key="7">
    <citation type="journal article" date="2007" name="Plant Cell">
        <title>Class-specific interaction of profilin and ADF isovariants with actin in the regulation of plant development.</title>
        <authorList>
            <person name="Kandasamy M.K."/>
            <person name="Burgos-Rivera B."/>
            <person name="McKinney E.C."/>
            <person name="Ruzicka D.R."/>
            <person name="Meagher R.B."/>
        </authorList>
    </citation>
    <scope>SUBCELLULAR LOCATION</scope>
</reference>
<reference key="8">
    <citation type="journal article" date="2009" name="J. Integr. Plant Biol.">
        <title>Arabidopsis profilin isoforms, PRF1 and PRF2 show distinctive binding activities and subcellular distributions.</title>
        <authorList>
            <person name="Wang F."/>
            <person name="Jing Y."/>
            <person name="Wang Z."/>
            <person name="Mao T."/>
            <person name="Samaj J."/>
            <person name="Yuan M."/>
            <person name="Ren H."/>
        </authorList>
    </citation>
    <scope>FUNCTION</scope>
    <scope>SUBCELLULAR LOCATION</scope>
    <scope>TISSUE SPECIFICITY</scope>
</reference>
<reference key="9">
    <citation type="journal article" date="2015" name="BMC Plant Biol.">
        <title>Arabidopsis plants deficient in constitutive class profilins reveal independent and quantitative genetic effects.</title>
        <authorList>
            <person name="Muessar K.J."/>
            <person name="Kandasamy M.K."/>
            <person name="McKinney E.C."/>
            <person name="Meagher R.B."/>
        </authorList>
    </citation>
    <scope>DISRUPTION PHENOTYPE</scope>
</reference>
<reference key="10">
    <citation type="journal article" date="2016" name="Plant Cell Physiol.">
        <title>Distinct biochemical properties of Arabidopsis thaliana actin isoforms.</title>
        <authorList>
            <person name="Kijima S.T."/>
            <person name="Hirose K."/>
            <person name="Kong S.G."/>
            <person name="Wada M."/>
            <person name="Uyeda T.Q."/>
        </authorList>
    </citation>
    <scope>FUNCTION</scope>
</reference>
<reference key="11">
    <citation type="journal article" date="2016" name="Plant Physiol.">
        <title>Profilin-dependent nucleation and assembly of actin filaments controls cell elongation in Arabidopsis.</title>
        <authorList>
            <person name="Cao L."/>
            <person name="Henty-Ridilla J.L."/>
            <person name="Blanchoin L."/>
            <person name="Staiger C.J."/>
        </authorList>
    </citation>
    <scope>FUNCTION</scope>
    <scope>DISRUPTION PHENOTYPE</scope>
</reference>
<reference key="12">
    <citation type="journal article" date="2018" name="Biochim. Biophys. Acta">
        <title>Molecular mechanism of Arabidopsis thaliana profilins as antifungal proteins.</title>
        <authorList>
            <person name="Park S.C."/>
            <person name="Kim I.R."/>
            <person name="Kim J.Y."/>
            <person name="Lee Y."/>
            <person name="Kim E.J."/>
            <person name="Jung J.H."/>
            <person name="Jung Y.J."/>
            <person name="Jang M.K."/>
            <person name="Lee J.R."/>
        </authorList>
    </citation>
    <scope>IDENTIFICATION BY MASS SPECTROMETRY</scope>
    <scope>FUNCTION</scope>
    <scope>TISSUE SPECIFICITY</scope>
</reference>
<reference key="13">
    <citation type="journal article" date="2018" name="Curr. Biol.">
        <title>Profilin negatively regulates formin-mediated actin assembly to modulate PAMP-triggered plant immunity.</title>
        <authorList>
            <person name="Sun H."/>
            <person name="Qiao Z."/>
            <person name="Chua K.P."/>
            <person name="Tursic A."/>
            <person name="Liu X."/>
            <person name="Gao Y.G."/>
            <person name="Mu Y."/>
            <person name="Hou X."/>
            <person name="Miao Y."/>
        </authorList>
    </citation>
    <scope>FUNCTION</scope>
</reference>
<reference key="14">
    <citation type="journal article" date="1997" name="Structure">
        <title>The crystal structure of a major allergen from plants.</title>
        <authorList>
            <person name="Thorn K.S."/>
            <person name="Christensen H.E.M."/>
            <person name="Shigeta R. Jr."/>
            <person name="Hudler D. Jr."/>
            <person name="Shalaby L."/>
            <person name="Lindnerg U."/>
            <person name="Chua N.-H."/>
            <person name="Schutt C.E."/>
        </authorList>
    </citation>
    <scope>X-RAY CRYSTALLOGRAPHY (1.60 ANGSTROMS)</scope>
</reference>
<evidence type="ECO:0000269" key="1">
    <source>
    </source>
</evidence>
<evidence type="ECO:0000269" key="2">
    <source>
    </source>
</evidence>
<evidence type="ECO:0000269" key="3">
    <source>
    </source>
</evidence>
<evidence type="ECO:0000269" key="4">
    <source>
    </source>
</evidence>
<evidence type="ECO:0000269" key="5">
    <source>
    </source>
</evidence>
<evidence type="ECO:0000269" key="6">
    <source>
    </source>
</evidence>
<evidence type="ECO:0000269" key="7">
    <source>
    </source>
</evidence>
<evidence type="ECO:0000269" key="8">
    <source>
    </source>
</evidence>
<evidence type="ECO:0000269" key="9">
    <source>
    </source>
</evidence>
<evidence type="ECO:0000269" key="10">
    <source>
    </source>
</evidence>
<evidence type="ECO:0000303" key="11">
    <source>
    </source>
</evidence>
<evidence type="ECO:0000303" key="12">
    <source>
    </source>
</evidence>
<evidence type="ECO:0000305" key="13"/>
<evidence type="ECO:0000312" key="14">
    <source>
        <dbReference type="Araport" id="AT2G19760"/>
    </source>
</evidence>
<evidence type="ECO:0000312" key="15">
    <source>
        <dbReference type="EMBL" id="AAC62140.1"/>
    </source>
</evidence>
<evidence type="ECO:0007829" key="16">
    <source>
        <dbReference type="PDB" id="3NUL"/>
    </source>
</evidence>
<sequence length="131" mass="14266">MSWQSYVDDHLMCDVEGNHLTAAAILGQDGSVWAQSAKFPQLKPQEIDGIKKDFEEPGFLAPTGLFLGGEKYMVIQGEQGAVIRGKKGPGGVTIKKTNQALVFGFYDEPMTGGQCNLVVERLGDYLIESEL</sequence>
<gene>
    <name evidence="11" type="primary">PRF1</name>
    <name evidence="12" type="synonym">PFN1</name>
    <name evidence="13" type="synonym">PRO1</name>
    <name evidence="14" type="ordered locus">At2g19760</name>
    <name evidence="15" type="ORF">F6F22.21</name>
</gene>
<name>PRF1_ARATH</name>
<keyword id="KW-0002">3D-structure</keyword>
<keyword id="KW-0009">Actin-binding</keyword>
<keyword id="KW-0020">Allergen</keyword>
<keyword id="KW-0963">Cytoplasm</keyword>
<keyword id="KW-0206">Cytoskeleton</keyword>
<keyword id="KW-0611">Plant defense</keyword>
<keyword id="KW-1185">Reference proteome</keyword>
<feature type="chain" id="PRO_0000199615" description="Profilin-1">
    <location>
        <begin position="1"/>
        <end position="131"/>
    </location>
</feature>
<feature type="helix" evidence="16">
    <location>
        <begin position="3"/>
        <end position="9"/>
    </location>
</feature>
<feature type="strand" evidence="16">
    <location>
        <begin position="21"/>
        <end position="27"/>
    </location>
</feature>
<feature type="strand" evidence="16">
    <location>
        <begin position="32"/>
        <end position="35"/>
    </location>
</feature>
<feature type="helix" evidence="16">
    <location>
        <begin position="44"/>
        <end position="55"/>
    </location>
</feature>
<feature type="turn" evidence="16">
    <location>
        <begin position="61"/>
        <end position="63"/>
    </location>
</feature>
<feature type="strand" evidence="16">
    <location>
        <begin position="65"/>
        <end position="67"/>
    </location>
</feature>
<feature type="strand" evidence="16">
    <location>
        <begin position="70"/>
        <end position="78"/>
    </location>
</feature>
<feature type="turn" evidence="16">
    <location>
        <begin position="79"/>
        <end position="81"/>
    </location>
</feature>
<feature type="strand" evidence="16">
    <location>
        <begin position="82"/>
        <end position="87"/>
    </location>
</feature>
<feature type="strand" evidence="16">
    <location>
        <begin position="90"/>
        <end position="96"/>
    </location>
</feature>
<feature type="strand" evidence="16">
    <location>
        <begin position="98"/>
        <end position="106"/>
    </location>
</feature>
<feature type="helix" evidence="16">
    <location>
        <begin position="112"/>
        <end position="128"/>
    </location>
</feature>
<dbReference type="EMBL" id="U43325">
    <property type="protein sequence ID" value="AAB39480.1"/>
    <property type="molecule type" value="mRNA"/>
</dbReference>
<dbReference type="EMBL" id="U43322">
    <property type="protein sequence ID" value="AAB39476.1"/>
    <property type="molecule type" value="Genomic_DNA"/>
</dbReference>
<dbReference type="EMBL" id="U43593">
    <property type="protein sequence ID" value="AAG10090.1"/>
    <property type="molecule type" value="Genomic_DNA"/>
</dbReference>
<dbReference type="EMBL" id="U43590">
    <property type="protein sequence ID" value="AAB46750.1"/>
    <property type="molecule type" value="mRNA"/>
</dbReference>
<dbReference type="EMBL" id="AC005169">
    <property type="protein sequence ID" value="AAC62140.1"/>
    <property type="molecule type" value="Genomic_DNA"/>
</dbReference>
<dbReference type="EMBL" id="CP002685">
    <property type="protein sequence ID" value="AEC06923.1"/>
    <property type="molecule type" value="Genomic_DNA"/>
</dbReference>
<dbReference type="EMBL" id="AY072427">
    <property type="protein sequence ID" value="AAL62419.1"/>
    <property type="molecule type" value="mRNA"/>
</dbReference>
<dbReference type="EMBL" id="BT000264">
    <property type="protein sequence ID" value="AAN15583.1"/>
    <property type="molecule type" value="mRNA"/>
</dbReference>
<dbReference type="PIR" id="G84580">
    <property type="entry name" value="G84580"/>
</dbReference>
<dbReference type="RefSeq" id="NP_179566.1">
    <property type="nucleotide sequence ID" value="NM_127534.3"/>
</dbReference>
<dbReference type="PDB" id="1A0K">
    <property type="method" value="X-ray"/>
    <property type="resolution" value="2.20 A"/>
    <property type="chains" value="A=1-131"/>
</dbReference>
<dbReference type="PDB" id="3NUL">
    <property type="method" value="X-ray"/>
    <property type="resolution" value="1.60 A"/>
    <property type="chains" value="A=2-131"/>
</dbReference>
<dbReference type="PDBsum" id="1A0K"/>
<dbReference type="PDBsum" id="3NUL"/>
<dbReference type="SMR" id="Q42449"/>
<dbReference type="BioGRID" id="1850">
    <property type="interactions" value="1"/>
</dbReference>
<dbReference type="FunCoup" id="Q42449">
    <property type="interactions" value="1524"/>
</dbReference>
<dbReference type="IntAct" id="Q42449">
    <property type="interactions" value="1"/>
</dbReference>
<dbReference type="STRING" id="3702.Q42449"/>
<dbReference type="PaxDb" id="3702-AT2G19760.1"/>
<dbReference type="ProteomicsDB" id="226504"/>
<dbReference type="EnsemblPlants" id="AT2G19760.1">
    <property type="protein sequence ID" value="AT2G19760.1"/>
    <property type="gene ID" value="AT2G19760"/>
</dbReference>
<dbReference type="GeneID" id="816495"/>
<dbReference type="Gramene" id="AT2G19760.1">
    <property type="protein sequence ID" value="AT2G19760.1"/>
    <property type="gene ID" value="AT2G19760"/>
</dbReference>
<dbReference type="KEGG" id="ath:AT2G19760"/>
<dbReference type="Araport" id="AT2G19760"/>
<dbReference type="TAIR" id="AT2G19760">
    <property type="gene designation" value="PRF1"/>
</dbReference>
<dbReference type="eggNOG" id="KOG1755">
    <property type="taxonomic scope" value="Eukaryota"/>
</dbReference>
<dbReference type="HOGENOM" id="CLU_120772_0_1_1"/>
<dbReference type="InParanoid" id="Q42449"/>
<dbReference type="OMA" id="GFCYAAI"/>
<dbReference type="OrthoDB" id="421374at2759"/>
<dbReference type="PhylomeDB" id="Q42449"/>
<dbReference type="EvolutionaryTrace" id="Q42449"/>
<dbReference type="PRO" id="PR:Q42449"/>
<dbReference type="Proteomes" id="UP000006548">
    <property type="component" value="Chromosome 2"/>
</dbReference>
<dbReference type="ExpressionAtlas" id="Q42449">
    <property type="expression patterns" value="baseline and differential"/>
</dbReference>
<dbReference type="GO" id="GO:0005737">
    <property type="term" value="C:cytoplasm"/>
    <property type="evidence" value="ECO:0007005"/>
    <property type="project" value="TAIR"/>
</dbReference>
<dbReference type="GO" id="GO:0005829">
    <property type="term" value="C:cytosol"/>
    <property type="evidence" value="ECO:0007005"/>
    <property type="project" value="TAIR"/>
</dbReference>
<dbReference type="GO" id="GO:0005739">
    <property type="term" value="C:mitochondrion"/>
    <property type="evidence" value="ECO:0007005"/>
    <property type="project" value="TAIR"/>
</dbReference>
<dbReference type="GO" id="GO:0005730">
    <property type="term" value="C:nucleolus"/>
    <property type="evidence" value="ECO:0007005"/>
    <property type="project" value="TAIR"/>
</dbReference>
<dbReference type="GO" id="GO:0005634">
    <property type="term" value="C:nucleus"/>
    <property type="evidence" value="ECO:0007005"/>
    <property type="project" value="TAIR"/>
</dbReference>
<dbReference type="GO" id="GO:0009524">
    <property type="term" value="C:phragmoplast"/>
    <property type="evidence" value="ECO:0007005"/>
    <property type="project" value="TAIR"/>
</dbReference>
<dbReference type="GO" id="GO:0005886">
    <property type="term" value="C:plasma membrane"/>
    <property type="evidence" value="ECO:0007005"/>
    <property type="project" value="TAIR"/>
</dbReference>
<dbReference type="GO" id="GO:0009506">
    <property type="term" value="C:plasmodesma"/>
    <property type="evidence" value="ECO:0007005"/>
    <property type="project" value="TAIR"/>
</dbReference>
<dbReference type="GO" id="GO:0005819">
    <property type="term" value="C:spindle"/>
    <property type="evidence" value="ECO:0007005"/>
    <property type="project" value="TAIR"/>
</dbReference>
<dbReference type="GO" id="GO:0003779">
    <property type="term" value="F:actin binding"/>
    <property type="evidence" value="ECO:0007669"/>
    <property type="project" value="UniProtKB-KW"/>
</dbReference>
<dbReference type="GO" id="GO:0008154">
    <property type="term" value="P:actin polymerization or depolymerization"/>
    <property type="evidence" value="ECO:0000314"/>
    <property type="project" value="TAIR"/>
</dbReference>
<dbReference type="GO" id="GO:0006952">
    <property type="term" value="P:defense response"/>
    <property type="evidence" value="ECO:0007669"/>
    <property type="project" value="UniProtKB-KW"/>
</dbReference>
<dbReference type="GO" id="GO:0010229">
    <property type="term" value="P:inflorescence development"/>
    <property type="evidence" value="ECO:0000315"/>
    <property type="project" value="TAIR"/>
</dbReference>
<dbReference type="GO" id="GO:0048527">
    <property type="term" value="P:lateral root development"/>
    <property type="evidence" value="ECO:0000315"/>
    <property type="project" value="TAIR"/>
</dbReference>
<dbReference type="GO" id="GO:0048366">
    <property type="term" value="P:leaf development"/>
    <property type="evidence" value="ECO:0000315"/>
    <property type="project" value="TAIR"/>
</dbReference>
<dbReference type="GO" id="GO:0009826">
    <property type="term" value="P:unidimensional cell growth"/>
    <property type="evidence" value="ECO:0000315"/>
    <property type="project" value="TAIR"/>
</dbReference>
<dbReference type="CDD" id="cd00148">
    <property type="entry name" value="PROF"/>
    <property type="match status" value="1"/>
</dbReference>
<dbReference type="FunFam" id="3.30.450.30:FF:000001">
    <property type="entry name" value="Profilin"/>
    <property type="match status" value="1"/>
</dbReference>
<dbReference type="Gene3D" id="3.30.450.30">
    <property type="entry name" value="Dynein light chain 2a, cytoplasmic"/>
    <property type="match status" value="1"/>
</dbReference>
<dbReference type="InterPro" id="IPR048278">
    <property type="entry name" value="PFN"/>
</dbReference>
<dbReference type="InterPro" id="IPR005455">
    <property type="entry name" value="PFN_euk"/>
</dbReference>
<dbReference type="InterPro" id="IPR036140">
    <property type="entry name" value="PFN_sf"/>
</dbReference>
<dbReference type="InterPro" id="IPR027310">
    <property type="entry name" value="Profilin_CS"/>
</dbReference>
<dbReference type="PANTHER" id="PTHR11604">
    <property type="entry name" value="PROFILIN"/>
    <property type="match status" value="1"/>
</dbReference>
<dbReference type="PANTHER" id="PTHR11604:SF24">
    <property type="entry name" value="PROFILIN-1-RELATED"/>
    <property type="match status" value="1"/>
</dbReference>
<dbReference type="Pfam" id="PF00235">
    <property type="entry name" value="Profilin"/>
    <property type="match status" value="1"/>
</dbReference>
<dbReference type="PRINTS" id="PR00392">
    <property type="entry name" value="PROFILIN"/>
</dbReference>
<dbReference type="PRINTS" id="PR01640">
    <property type="entry name" value="PROFILINPLNT"/>
</dbReference>
<dbReference type="SMART" id="SM00392">
    <property type="entry name" value="PROF"/>
    <property type="match status" value="1"/>
</dbReference>
<dbReference type="SUPFAM" id="SSF55770">
    <property type="entry name" value="Profilin (actin-binding protein)"/>
    <property type="match status" value="1"/>
</dbReference>
<dbReference type="PROSITE" id="PS00414">
    <property type="entry name" value="PROFILIN"/>
    <property type="match status" value="1"/>
</dbReference>
<proteinExistence type="evidence at protein level"/>
<comment type="function">
    <text evidence="3 5 6 7 8">Binds to actin monomers and regulates the organization of the actin cytoskeleton (PubMed:26574597). At high concentrations, profilin prevents the polymerization of actin, whereas it enhances it at low concentrations (PubMed:29861135). At low concentrations, associates with the poly-proline motif of formins to enhance actin filament elongation rate (PubMed:29861135). Binds ACT1, ACT7 and ACT11 and inhibits actin polymerization (PubMed:26578694). Coordinates the stochastic dynamic properties of actin filaments by modulating formin-mediated actin nucleation and assembly during axial cell expansion (PubMed:26574597). Binds G-actin and poly-L-proline in vitro (PubMed:19200149). Inhibits cell growth of various pathogenic fungal strains (PubMed:30056100). May play a role as antifungal proteins in the defense system against fungal pathogen attacks (PubMed:30056100).</text>
</comment>
<comment type="subunit">
    <text evidence="13">Occurs in many kinds of cells as a complex with monomeric actin in a 1:1 ratio.</text>
</comment>
<comment type="subcellular location">
    <subcellularLocation>
        <location evidence="13">Cytoplasm</location>
        <location evidence="13">Cytoskeleton</location>
    </subcellularLocation>
    <subcellularLocation>
        <location evidence="2 3">Cytoplasm</location>
    </subcellularLocation>
    <text evidence="3">Probably associated with cytoplasmic actin filaments.</text>
</comment>
<comment type="tissue specificity">
    <text evidence="3 8 9 10">Expressed at low levels roots, leaves, stems, flowers and siliques (PubMed:8685262, PubMed:8771785). Expressed in leaf epidermal cells, trichomes and stem epidermal cells (PubMed:19200149). Detected in phloem exudates (at protein level) (PubMed:30056100).</text>
</comment>
<comment type="induction">
    <text evidence="1">Down-regulated by light.</text>
</comment>
<comment type="disruption phenotype">
    <text evidence="1 4 5">Delayed germination (PubMed:11340190). In young seedlings, excessive numbers of root hairs, abnormal raised cotyledons, elongated hypocotyls, and elongated cells in the hypocotyl (PubMed:11340190, PubMed:26574597). Defects in rosette leaf and inflorescence development (PubMed:26160044).</text>
</comment>
<comment type="allergen">
    <text evidence="13">Causes an allergic reaction in human.</text>
</comment>
<comment type="similarity">
    <text evidence="13">Belongs to the profilin family.</text>
</comment>
<organism>
    <name type="scientific">Arabidopsis thaliana</name>
    <name type="common">Mouse-ear cress</name>
    <dbReference type="NCBI Taxonomy" id="3702"/>
    <lineage>
        <taxon>Eukaryota</taxon>
        <taxon>Viridiplantae</taxon>
        <taxon>Streptophyta</taxon>
        <taxon>Embryophyta</taxon>
        <taxon>Tracheophyta</taxon>
        <taxon>Spermatophyta</taxon>
        <taxon>Magnoliopsida</taxon>
        <taxon>eudicotyledons</taxon>
        <taxon>Gunneridae</taxon>
        <taxon>Pentapetalae</taxon>
        <taxon>rosids</taxon>
        <taxon>malvids</taxon>
        <taxon>Brassicales</taxon>
        <taxon>Brassicaceae</taxon>
        <taxon>Camelineae</taxon>
        <taxon>Arabidopsis</taxon>
    </lineage>
</organism>